<accession>P47879</accession>
<accession>O35666</accession>
<accession>Q3TMV0</accession>
<proteinExistence type="evidence at protein level"/>
<sequence>MLPFGLVAALLLAAGPRPSLGDEAIHCPPCSEEKLARCRPPVGCEELVREPGCGCCATCALGLGMPCGVYTPRCGSGMRCYPPRGVEKPLRTLMHGQGVCTELSEIEAIQESLQTSDKDESEHPNNSFNPCSAHDHRCLQKHMAKIRDRSKMKIVGTPREEPRPVPQGSCQSELHRALERLAASQSRTHEDLFIIPIPNCDRNGNFHPKQCHPALDGQRGKCWCVDRKTGVKLPGGLEPKGELDCHQLADSFQE</sequence>
<name>IBP4_MOUSE</name>
<dbReference type="EMBL" id="X81582">
    <property type="protein sequence ID" value="CAA57272.1"/>
    <property type="molecule type" value="mRNA"/>
</dbReference>
<dbReference type="EMBL" id="X76066">
    <property type="protein sequence ID" value="CAA53667.1"/>
    <property type="molecule type" value="Genomic_DNA"/>
</dbReference>
<dbReference type="EMBL" id="AK150229">
    <property type="protein sequence ID" value="BAE29395.1"/>
    <property type="molecule type" value="mRNA"/>
</dbReference>
<dbReference type="EMBL" id="AK165688">
    <property type="protein sequence ID" value="BAE38340.1"/>
    <property type="molecule type" value="mRNA"/>
</dbReference>
<dbReference type="EMBL" id="BC019836">
    <property type="protein sequence ID" value="AAH19836.1"/>
    <property type="molecule type" value="mRNA"/>
</dbReference>
<dbReference type="EMBL" id="Z95492">
    <property type="protein sequence ID" value="CAB08859.1"/>
    <property type="molecule type" value="Genomic_DNA"/>
</dbReference>
<dbReference type="CCDS" id="CCDS25371.1"/>
<dbReference type="PIR" id="I48599">
    <property type="entry name" value="I48599"/>
</dbReference>
<dbReference type="PIR" id="I48603">
    <property type="entry name" value="I48603"/>
</dbReference>
<dbReference type="RefSeq" id="NP_034647.1">
    <property type="nucleotide sequence ID" value="NM_010517.4"/>
</dbReference>
<dbReference type="RefSeq" id="XP_030101458.1">
    <property type="nucleotide sequence ID" value="XM_030245598.1"/>
</dbReference>
<dbReference type="RefSeq" id="XP_030101459.1">
    <property type="nucleotide sequence ID" value="XM_030245599.2"/>
</dbReference>
<dbReference type="RefSeq" id="XP_036012239.1">
    <property type="nucleotide sequence ID" value="XM_036156346.1"/>
</dbReference>
<dbReference type="SMR" id="P47879"/>
<dbReference type="DIP" id="DIP-60633N"/>
<dbReference type="FunCoup" id="P47879">
    <property type="interactions" value="475"/>
</dbReference>
<dbReference type="IntAct" id="P47879">
    <property type="interactions" value="2"/>
</dbReference>
<dbReference type="STRING" id="10090.ENSMUSP00000017637"/>
<dbReference type="MEROPS" id="I31.952"/>
<dbReference type="GlyCosmos" id="P47879">
    <property type="glycosylation" value="1 site, No reported glycans"/>
</dbReference>
<dbReference type="GlyGen" id="P47879">
    <property type="glycosylation" value="1 site"/>
</dbReference>
<dbReference type="iPTMnet" id="P47879"/>
<dbReference type="PhosphoSitePlus" id="P47879"/>
<dbReference type="SwissPalm" id="P47879"/>
<dbReference type="CPTAC" id="non-CPTAC-3986"/>
<dbReference type="jPOST" id="P47879"/>
<dbReference type="PaxDb" id="10090-ENSMUSP00000017637"/>
<dbReference type="PeptideAtlas" id="P47879"/>
<dbReference type="ProteomicsDB" id="267081"/>
<dbReference type="Antibodypedia" id="16491">
    <property type="antibodies" value="655 antibodies from 39 providers"/>
</dbReference>
<dbReference type="DNASU" id="16010"/>
<dbReference type="Ensembl" id="ENSMUST00000017637.13">
    <property type="protein sequence ID" value="ENSMUSP00000017637.7"/>
    <property type="gene ID" value="ENSMUSG00000017493.13"/>
</dbReference>
<dbReference type="GeneID" id="16010"/>
<dbReference type="KEGG" id="mmu:16010"/>
<dbReference type="UCSC" id="uc007lie.1">
    <property type="organism name" value="mouse"/>
</dbReference>
<dbReference type="AGR" id="MGI:96439"/>
<dbReference type="CTD" id="3487"/>
<dbReference type="MGI" id="MGI:96439">
    <property type="gene designation" value="Igfbp4"/>
</dbReference>
<dbReference type="VEuPathDB" id="HostDB:ENSMUSG00000017493"/>
<dbReference type="eggNOG" id="ENOG502QTC8">
    <property type="taxonomic scope" value="Eukaryota"/>
</dbReference>
<dbReference type="GeneTree" id="ENSGT00940000159647"/>
<dbReference type="HOGENOM" id="CLU_070833_3_0_1"/>
<dbReference type="InParanoid" id="P47879"/>
<dbReference type="OMA" id="QEPGCGC"/>
<dbReference type="OrthoDB" id="8477465at2759"/>
<dbReference type="PhylomeDB" id="P47879"/>
<dbReference type="TreeFam" id="TF331211"/>
<dbReference type="Reactome" id="R-MMU-381426">
    <property type="pathway name" value="Regulation of Insulin-like Growth Factor (IGF) transport and uptake by Insulin-like Growth Factor Binding Proteins (IGFBPs)"/>
</dbReference>
<dbReference type="Reactome" id="R-MMU-8957275">
    <property type="pathway name" value="Post-translational protein phosphorylation"/>
</dbReference>
<dbReference type="BioGRID-ORCS" id="16010">
    <property type="hits" value="3 hits in 77 CRISPR screens"/>
</dbReference>
<dbReference type="ChiTaRS" id="Igfbp4">
    <property type="organism name" value="mouse"/>
</dbReference>
<dbReference type="PRO" id="PR:P47879"/>
<dbReference type="Proteomes" id="UP000000589">
    <property type="component" value="Chromosome 11"/>
</dbReference>
<dbReference type="RNAct" id="P47879">
    <property type="molecule type" value="protein"/>
</dbReference>
<dbReference type="Bgee" id="ENSMUSG00000017493">
    <property type="expression patterns" value="Expressed in external carotid artery and 262 other cell types or tissues"/>
</dbReference>
<dbReference type="ExpressionAtlas" id="P47879">
    <property type="expression patterns" value="baseline and differential"/>
</dbReference>
<dbReference type="GO" id="GO:0005615">
    <property type="term" value="C:extracellular space"/>
    <property type="evidence" value="ECO:0000314"/>
    <property type="project" value="MGI"/>
</dbReference>
<dbReference type="GO" id="GO:0005520">
    <property type="term" value="F:insulin-like growth factor binding"/>
    <property type="evidence" value="ECO:0000353"/>
    <property type="project" value="MGI"/>
</dbReference>
<dbReference type="GO" id="GO:0000165">
    <property type="term" value="P:MAPK cascade"/>
    <property type="evidence" value="ECO:0000316"/>
    <property type="project" value="MGI"/>
</dbReference>
<dbReference type="GO" id="GO:0043568">
    <property type="term" value="P:positive regulation of insulin-like growth factor receptor signaling pathway"/>
    <property type="evidence" value="ECO:0000316"/>
    <property type="project" value="MGI"/>
</dbReference>
<dbReference type="GO" id="GO:0043410">
    <property type="term" value="P:positive regulation of MAPK cascade"/>
    <property type="evidence" value="ECO:0000316"/>
    <property type="project" value="MGI"/>
</dbReference>
<dbReference type="GO" id="GO:0001558">
    <property type="term" value="P:regulation of cell growth"/>
    <property type="evidence" value="ECO:0000316"/>
    <property type="project" value="MGI"/>
</dbReference>
<dbReference type="GO" id="GO:0010906">
    <property type="term" value="P:regulation of glucose metabolic process"/>
    <property type="evidence" value="ECO:0000316"/>
    <property type="project" value="MGI"/>
</dbReference>
<dbReference type="GO" id="GO:0040008">
    <property type="term" value="P:regulation of growth"/>
    <property type="evidence" value="ECO:0000316"/>
    <property type="project" value="MGI"/>
</dbReference>
<dbReference type="GO" id="GO:0044342">
    <property type="term" value="P:type B pancreatic cell proliferation"/>
    <property type="evidence" value="ECO:0000316"/>
    <property type="project" value="MGI"/>
</dbReference>
<dbReference type="CDD" id="cd00191">
    <property type="entry name" value="TY"/>
    <property type="match status" value="1"/>
</dbReference>
<dbReference type="FunFam" id="4.10.40.20:FF:000001">
    <property type="entry name" value="Insulin-like growth factor binding protein 5"/>
    <property type="match status" value="1"/>
</dbReference>
<dbReference type="FunFam" id="4.10.800.10:FF:000002">
    <property type="entry name" value="Insulin-like growth factor-binding protein 2"/>
    <property type="match status" value="1"/>
</dbReference>
<dbReference type="Gene3D" id="4.10.40.20">
    <property type="match status" value="1"/>
</dbReference>
<dbReference type="Gene3D" id="4.10.800.10">
    <property type="entry name" value="Thyroglobulin type-1"/>
    <property type="match status" value="1"/>
</dbReference>
<dbReference type="InterPro" id="IPR009030">
    <property type="entry name" value="Growth_fac_rcpt_cys_sf"/>
</dbReference>
<dbReference type="InterPro" id="IPR022327">
    <property type="entry name" value="IGFBP-4"/>
</dbReference>
<dbReference type="InterPro" id="IPR000867">
    <property type="entry name" value="IGFBP-like"/>
</dbReference>
<dbReference type="InterPro" id="IPR022321">
    <property type="entry name" value="IGFBP_1-6_chordata"/>
</dbReference>
<dbReference type="InterPro" id="IPR017891">
    <property type="entry name" value="Insulin_GF-bd_Cys-rich_CS"/>
</dbReference>
<dbReference type="InterPro" id="IPR000716">
    <property type="entry name" value="Thyroglobulin_1"/>
</dbReference>
<dbReference type="InterPro" id="IPR036857">
    <property type="entry name" value="Thyroglobulin_1_sf"/>
</dbReference>
<dbReference type="PANTHER" id="PTHR11551">
    <property type="entry name" value="INSULIN-LIKE GROWTH FACTOR BINDING PROTEIN"/>
    <property type="match status" value="1"/>
</dbReference>
<dbReference type="PANTHER" id="PTHR11551:SF7">
    <property type="entry name" value="INSULIN-LIKE GROWTH FACTOR-BINDING PROTEIN 4"/>
    <property type="match status" value="1"/>
</dbReference>
<dbReference type="Pfam" id="PF00219">
    <property type="entry name" value="IGFBP"/>
    <property type="match status" value="1"/>
</dbReference>
<dbReference type="Pfam" id="PF00086">
    <property type="entry name" value="Thyroglobulin_1"/>
    <property type="match status" value="1"/>
</dbReference>
<dbReference type="PRINTS" id="PR01976">
    <property type="entry name" value="IGFBPFAMILY"/>
</dbReference>
<dbReference type="PRINTS" id="PR01980">
    <property type="entry name" value="IGFBPFAMILY4"/>
</dbReference>
<dbReference type="SMART" id="SM00121">
    <property type="entry name" value="IB"/>
    <property type="match status" value="1"/>
</dbReference>
<dbReference type="SMART" id="SM00211">
    <property type="entry name" value="TY"/>
    <property type="match status" value="1"/>
</dbReference>
<dbReference type="SUPFAM" id="SSF57184">
    <property type="entry name" value="Growth factor receptor domain"/>
    <property type="match status" value="1"/>
</dbReference>
<dbReference type="SUPFAM" id="SSF57610">
    <property type="entry name" value="Thyroglobulin type-1 domain"/>
    <property type="match status" value="1"/>
</dbReference>
<dbReference type="PROSITE" id="PS00222">
    <property type="entry name" value="IGFBP_N_1"/>
    <property type="match status" value="1"/>
</dbReference>
<dbReference type="PROSITE" id="PS51323">
    <property type="entry name" value="IGFBP_N_2"/>
    <property type="match status" value="1"/>
</dbReference>
<dbReference type="PROSITE" id="PS00484">
    <property type="entry name" value="THYROGLOBULIN_1_1"/>
    <property type="match status" value="1"/>
</dbReference>
<dbReference type="PROSITE" id="PS51162">
    <property type="entry name" value="THYROGLOBULIN_1_2"/>
    <property type="match status" value="1"/>
</dbReference>
<organism>
    <name type="scientific">Mus musculus</name>
    <name type="common">Mouse</name>
    <dbReference type="NCBI Taxonomy" id="10090"/>
    <lineage>
        <taxon>Eukaryota</taxon>
        <taxon>Metazoa</taxon>
        <taxon>Chordata</taxon>
        <taxon>Craniata</taxon>
        <taxon>Vertebrata</taxon>
        <taxon>Euteleostomi</taxon>
        <taxon>Mammalia</taxon>
        <taxon>Eutheria</taxon>
        <taxon>Euarchontoglires</taxon>
        <taxon>Glires</taxon>
        <taxon>Rodentia</taxon>
        <taxon>Myomorpha</taxon>
        <taxon>Muroidea</taxon>
        <taxon>Muridae</taxon>
        <taxon>Murinae</taxon>
        <taxon>Mus</taxon>
        <taxon>Mus</taxon>
    </lineage>
</organism>
<gene>
    <name type="primary">Igfbp4</name>
    <name type="synonym">Igfbp-4</name>
</gene>
<feature type="signal peptide" evidence="1">
    <location>
        <begin position="1"/>
        <end position="21"/>
    </location>
</feature>
<feature type="chain" id="PRO_0000014383" description="Insulin-like growth factor-binding protein 4">
    <location>
        <begin position="22"/>
        <end position="254"/>
    </location>
</feature>
<feature type="domain" description="IGFBP N-terminal" evidence="5">
    <location>
        <begin position="23"/>
        <end position="103"/>
    </location>
</feature>
<feature type="domain" description="Thyroglobulin type-1" evidence="4">
    <location>
        <begin position="167"/>
        <end position="245"/>
    </location>
</feature>
<feature type="modified residue" description="Phosphoserine" evidence="2">
    <location>
        <position position="251"/>
    </location>
</feature>
<feature type="glycosylation site" description="N-linked (GlcNAc...) asparagine" evidence="3">
    <location>
        <position position="125"/>
    </location>
</feature>
<feature type="disulfide bond" evidence="5">
    <location>
        <begin position="27"/>
        <end position="53"/>
    </location>
</feature>
<feature type="disulfide bond" evidence="5">
    <location>
        <begin position="30"/>
        <end position="55"/>
    </location>
</feature>
<feature type="disulfide bond" evidence="5">
    <location>
        <begin position="38"/>
        <end position="56"/>
    </location>
</feature>
<feature type="disulfide bond" evidence="5">
    <location>
        <begin position="44"/>
        <end position="59"/>
    </location>
</feature>
<feature type="disulfide bond" evidence="5">
    <location>
        <begin position="67"/>
        <end position="80"/>
    </location>
</feature>
<feature type="disulfide bond" evidence="5">
    <location>
        <begin position="74"/>
        <end position="100"/>
    </location>
</feature>
<feature type="disulfide bond" evidence="4">
    <location>
        <begin position="131"/>
        <end position="138"/>
    </location>
</feature>
<feature type="disulfide bond" evidence="4">
    <location>
        <begin position="170"/>
        <end position="200"/>
    </location>
</feature>
<feature type="disulfide bond" evidence="4">
    <location>
        <begin position="211"/>
        <end position="222"/>
    </location>
</feature>
<feature type="disulfide bond" evidence="4">
    <location>
        <begin position="224"/>
        <end position="245"/>
    </location>
</feature>
<feature type="sequence conflict" description="In Ref. 1; CAA57272." evidence="6" ref="1">
    <original>FG</original>
    <variation>CS</variation>
    <location>
        <begin position="4"/>
        <end position="5"/>
    </location>
</feature>
<feature type="sequence conflict" description="In Ref. 1; CAA57272." evidence="6" ref="1">
    <original>A</original>
    <variation>T</variation>
    <location>
        <position position="13"/>
    </location>
</feature>
<feature type="sequence conflict" description="In Ref. 1; CAA57272." evidence="6" ref="1">
    <original>C</original>
    <variation>S</variation>
    <location>
        <position position="56"/>
    </location>
</feature>
<feature type="sequence conflict" description="In Ref. 1; CAA57272." evidence="6" ref="1">
    <original>C</original>
    <variation>G</variation>
    <location>
        <position position="67"/>
    </location>
</feature>
<keyword id="KW-1015">Disulfide bond</keyword>
<keyword id="KW-0325">Glycoprotein</keyword>
<keyword id="KW-0340">Growth factor binding</keyword>
<keyword id="KW-0597">Phosphoprotein</keyword>
<keyword id="KW-1185">Reference proteome</keyword>
<keyword id="KW-0964">Secreted</keyword>
<keyword id="KW-0732">Signal</keyword>
<comment type="function">
    <text>IGF-binding proteins prolong the half-life of the IGFs and have been shown to either inhibit or stimulate the growth promoting effects of the IGFs on cell culture. They alter the interaction of IGFs with their cell surface receptors.</text>
</comment>
<comment type="subunit">
    <text>Binds IGF2 more than IGF1.</text>
</comment>
<comment type="interaction">
    <interactant intactId="EBI-15706768">
        <id>P47879</id>
    </interactant>
    <interactant intactId="EBI-6171689">
        <id>Q61091</id>
        <label>Fzd8</label>
    </interactant>
    <organismsDiffer>false</organismsDiffer>
    <experiments>3</experiments>
</comment>
<comment type="interaction">
    <interactant intactId="EBI-15706768">
        <id>P47879</id>
    </interactant>
    <interactant intactId="EBI-910915">
        <id>O75581</id>
        <label>LRP6</label>
    </interactant>
    <organismsDiffer>true</organismsDiffer>
    <experiments>4</experiments>
</comment>
<comment type="subcellular location">
    <subcellularLocation>
        <location>Secreted</location>
    </subcellularLocation>
</comment>
<reference key="1">
    <citation type="journal article" date="1994" name="Mol. Cell. Endocrinol.">
        <title>cDNA cloning and mRNA expression of the six mouse insulin-like growth factor binding proteins.</title>
        <authorList>
            <person name="Schuller A.G.P."/>
            <person name="Groffen C."/>
            <person name="van Neck J.W."/>
            <person name="Zwarthoff E.C."/>
            <person name="Drop S.L.S."/>
        </authorList>
    </citation>
    <scope>NUCLEOTIDE SEQUENCE [MRNA]</scope>
    <source>
        <tissue>Liver</tissue>
    </source>
</reference>
<reference key="2">
    <citation type="journal article" date="1994" name="Biochem. Mol. Biol. Int.">
        <title>Molecular cloning of mouse insulin-like growth factor binding protein 4 (IGFBP4) cDNA and expression of a fusion protein with IGF-binding activity.</title>
        <authorList>
            <person name="Bethel C.R."/>
            <person name="Vitullo J.C."/>
            <person name="Miller R.E."/>
            <person name="Aron D.C."/>
        </authorList>
    </citation>
    <scope>NUCLEOTIDE SEQUENCE [GENOMIC DNA]</scope>
    <source>
        <strain>C57BL/6J</strain>
    </source>
</reference>
<reference key="3">
    <citation type="journal article" date="2005" name="Science">
        <title>The transcriptional landscape of the mammalian genome.</title>
        <authorList>
            <person name="Carninci P."/>
            <person name="Kasukawa T."/>
            <person name="Katayama S."/>
            <person name="Gough J."/>
            <person name="Frith M.C."/>
            <person name="Maeda N."/>
            <person name="Oyama R."/>
            <person name="Ravasi T."/>
            <person name="Lenhard B."/>
            <person name="Wells C."/>
            <person name="Kodzius R."/>
            <person name="Shimokawa K."/>
            <person name="Bajic V.B."/>
            <person name="Brenner S.E."/>
            <person name="Batalov S."/>
            <person name="Forrest A.R."/>
            <person name="Zavolan M."/>
            <person name="Davis M.J."/>
            <person name="Wilming L.G."/>
            <person name="Aidinis V."/>
            <person name="Allen J.E."/>
            <person name="Ambesi-Impiombato A."/>
            <person name="Apweiler R."/>
            <person name="Aturaliya R.N."/>
            <person name="Bailey T.L."/>
            <person name="Bansal M."/>
            <person name="Baxter L."/>
            <person name="Beisel K.W."/>
            <person name="Bersano T."/>
            <person name="Bono H."/>
            <person name="Chalk A.M."/>
            <person name="Chiu K.P."/>
            <person name="Choudhary V."/>
            <person name="Christoffels A."/>
            <person name="Clutterbuck D.R."/>
            <person name="Crowe M.L."/>
            <person name="Dalla E."/>
            <person name="Dalrymple B.P."/>
            <person name="de Bono B."/>
            <person name="Della Gatta G."/>
            <person name="di Bernardo D."/>
            <person name="Down T."/>
            <person name="Engstrom P."/>
            <person name="Fagiolini M."/>
            <person name="Faulkner G."/>
            <person name="Fletcher C.F."/>
            <person name="Fukushima T."/>
            <person name="Furuno M."/>
            <person name="Futaki S."/>
            <person name="Gariboldi M."/>
            <person name="Georgii-Hemming P."/>
            <person name="Gingeras T.R."/>
            <person name="Gojobori T."/>
            <person name="Green R.E."/>
            <person name="Gustincich S."/>
            <person name="Harbers M."/>
            <person name="Hayashi Y."/>
            <person name="Hensch T.K."/>
            <person name="Hirokawa N."/>
            <person name="Hill D."/>
            <person name="Huminiecki L."/>
            <person name="Iacono M."/>
            <person name="Ikeo K."/>
            <person name="Iwama A."/>
            <person name="Ishikawa T."/>
            <person name="Jakt M."/>
            <person name="Kanapin A."/>
            <person name="Katoh M."/>
            <person name="Kawasawa Y."/>
            <person name="Kelso J."/>
            <person name="Kitamura H."/>
            <person name="Kitano H."/>
            <person name="Kollias G."/>
            <person name="Krishnan S.P."/>
            <person name="Kruger A."/>
            <person name="Kummerfeld S.K."/>
            <person name="Kurochkin I.V."/>
            <person name="Lareau L.F."/>
            <person name="Lazarevic D."/>
            <person name="Lipovich L."/>
            <person name="Liu J."/>
            <person name="Liuni S."/>
            <person name="McWilliam S."/>
            <person name="Madan Babu M."/>
            <person name="Madera M."/>
            <person name="Marchionni L."/>
            <person name="Matsuda H."/>
            <person name="Matsuzawa S."/>
            <person name="Miki H."/>
            <person name="Mignone F."/>
            <person name="Miyake S."/>
            <person name="Morris K."/>
            <person name="Mottagui-Tabar S."/>
            <person name="Mulder N."/>
            <person name="Nakano N."/>
            <person name="Nakauchi H."/>
            <person name="Ng P."/>
            <person name="Nilsson R."/>
            <person name="Nishiguchi S."/>
            <person name="Nishikawa S."/>
            <person name="Nori F."/>
            <person name="Ohara O."/>
            <person name="Okazaki Y."/>
            <person name="Orlando V."/>
            <person name="Pang K.C."/>
            <person name="Pavan W.J."/>
            <person name="Pavesi G."/>
            <person name="Pesole G."/>
            <person name="Petrovsky N."/>
            <person name="Piazza S."/>
            <person name="Reed J."/>
            <person name="Reid J.F."/>
            <person name="Ring B.Z."/>
            <person name="Ringwald M."/>
            <person name="Rost B."/>
            <person name="Ruan Y."/>
            <person name="Salzberg S.L."/>
            <person name="Sandelin A."/>
            <person name="Schneider C."/>
            <person name="Schoenbach C."/>
            <person name="Sekiguchi K."/>
            <person name="Semple C.A."/>
            <person name="Seno S."/>
            <person name="Sessa L."/>
            <person name="Sheng Y."/>
            <person name="Shibata Y."/>
            <person name="Shimada H."/>
            <person name="Shimada K."/>
            <person name="Silva D."/>
            <person name="Sinclair B."/>
            <person name="Sperling S."/>
            <person name="Stupka E."/>
            <person name="Sugiura K."/>
            <person name="Sultana R."/>
            <person name="Takenaka Y."/>
            <person name="Taki K."/>
            <person name="Tammoja K."/>
            <person name="Tan S.L."/>
            <person name="Tang S."/>
            <person name="Taylor M.S."/>
            <person name="Tegner J."/>
            <person name="Teichmann S.A."/>
            <person name="Ueda H.R."/>
            <person name="van Nimwegen E."/>
            <person name="Verardo R."/>
            <person name="Wei C.L."/>
            <person name="Yagi K."/>
            <person name="Yamanishi H."/>
            <person name="Zabarovsky E."/>
            <person name="Zhu S."/>
            <person name="Zimmer A."/>
            <person name="Hide W."/>
            <person name="Bult C."/>
            <person name="Grimmond S.M."/>
            <person name="Teasdale R.D."/>
            <person name="Liu E.T."/>
            <person name="Brusic V."/>
            <person name="Quackenbush J."/>
            <person name="Wahlestedt C."/>
            <person name="Mattick J.S."/>
            <person name="Hume D.A."/>
            <person name="Kai C."/>
            <person name="Sasaki D."/>
            <person name="Tomaru Y."/>
            <person name="Fukuda S."/>
            <person name="Kanamori-Katayama M."/>
            <person name="Suzuki M."/>
            <person name="Aoki J."/>
            <person name="Arakawa T."/>
            <person name="Iida J."/>
            <person name="Imamura K."/>
            <person name="Itoh M."/>
            <person name="Kato T."/>
            <person name="Kawaji H."/>
            <person name="Kawagashira N."/>
            <person name="Kawashima T."/>
            <person name="Kojima M."/>
            <person name="Kondo S."/>
            <person name="Konno H."/>
            <person name="Nakano K."/>
            <person name="Ninomiya N."/>
            <person name="Nishio T."/>
            <person name="Okada M."/>
            <person name="Plessy C."/>
            <person name="Shibata K."/>
            <person name="Shiraki T."/>
            <person name="Suzuki S."/>
            <person name="Tagami M."/>
            <person name="Waki K."/>
            <person name="Watahiki A."/>
            <person name="Okamura-Oho Y."/>
            <person name="Suzuki H."/>
            <person name="Kawai J."/>
            <person name="Hayashizaki Y."/>
        </authorList>
    </citation>
    <scope>NUCLEOTIDE SEQUENCE [LARGE SCALE MRNA]</scope>
    <source>
        <tissue>Bone marrow</tissue>
    </source>
</reference>
<reference key="4">
    <citation type="journal article" date="2004" name="Genome Res.">
        <title>The status, quality, and expansion of the NIH full-length cDNA project: the Mammalian Gene Collection (MGC).</title>
        <authorList>
            <consortium name="The MGC Project Team"/>
        </authorList>
    </citation>
    <scope>NUCLEOTIDE SEQUENCE [LARGE SCALE MRNA]</scope>
    <source>
        <strain>FVB/N</strain>
        <tissue>Liver</tissue>
    </source>
</reference>
<reference key="5">
    <citation type="journal article" date="1998" name="DNA Cell Biol.">
        <title>Characterization of the mouse insulin-like growth factor binding protein 4 gene regulatory region and expression studies.</title>
        <authorList>
            <person name="Glantschnig H."/>
            <person name="Varga F."/>
            <person name="Luegmayr E."/>
            <person name="Klaushofer K."/>
        </authorList>
    </citation>
    <scope>NUCLEOTIDE SEQUENCE [GENOMIC DNA] OF 1-114</scope>
    <source>
        <strain>BALB/cJ</strain>
        <tissue>Brain</tissue>
    </source>
</reference>
<reference key="6">
    <citation type="journal article" date="2010" name="Cell">
        <title>A tissue-specific atlas of mouse protein phosphorylation and expression.</title>
        <authorList>
            <person name="Huttlin E.L."/>
            <person name="Jedrychowski M.P."/>
            <person name="Elias J.E."/>
            <person name="Goswami T."/>
            <person name="Rad R."/>
            <person name="Beausoleil S.A."/>
            <person name="Villen J."/>
            <person name="Haas W."/>
            <person name="Sowa M.E."/>
            <person name="Gygi S.P."/>
        </authorList>
    </citation>
    <scope>IDENTIFICATION BY MASS SPECTROMETRY [LARGE SCALE ANALYSIS]</scope>
    <source>
        <tissue>Kidney</tissue>
        <tissue>Liver</tissue>
    </source>
</reference>
<protein>
    <recommendedName>
        <fullName>Insulin-like growth factor-binding protein 4</fullName>
        <shortName>IBP-4</shortName>
        <shortName>IGF-binding protein 4</shortName>
        <shortName>IGFBP-4</shortName>
    </recommendedName>
</protein>
<evidence type="ECO:0000250" key="1"/>
<evidence type="ECO:0000250" key="2">
    <source>
        <dbReference type="UniProtKB" id="P22692"/>
    </source>
</evidence>
<evidence type="ECO:0000255" key="3"/>
<evidence type="ECO:0000255" key="4">
    <source>
        <dbReference type="PROSITE-ProRule" id="PRU00500"/>
    </source>
</evidence>
<evidence type="ECO:0000255" key="5">
    <source>
        <dbReference type="PROSITE-ProRule" id="PRU00653"/>
    </source>
</evidence>
<evidence type="ECO:0000305" key="6"/>